<dbReference type="EC" id="2.1.1.33" evidence="2"/>
<dbReference type="EMBL" id="CP000514">
    <property type="protein sequence ID" value="ABM17627.1"/>
    <property type="molecule type" value="Genomic_DNA"/>
</dbReference>
<dbReference type="RefSeq" id="WP_011784071.1">
    <property type="nucleotide sequence ID" value="NC_008740.1"/>
</dbReference>
<dbReference type="SMR" id="A1TY08"/>
<dbReference type="STRING" id="351348.Maqu_0526"/>
<dbReference type="KEGG" id="maq:Maqu_0526"/>
<dbReference type="eggNOG" id="COG0220">
    <property type="taxonomic scope" value="Bacteria"/>
</dbReference>
<dbReference type="HOGENOM" id="CLU_050910_0_1_6"/>
<dbReference type="OrthoDB" id="9802090at2"/>
<dbReference type="UniPathway" id="UPA00989"/>
<dbReference type="Proteomes" id="UP000000998">
    <property type="component" value="Chromosome"/>
</dbReference>
<dbReference type="GO" id="GO:0043527">
    <property type="term" value="C:tRNA methyltransferase complex"/>
    <property type="evidence" value="ECO:0007669"/>
    <property type="project" value="TreeGrafter"/>
</dbReference>
<dbReference type="GO" id="GO:0008176">
    <property type="term" value="F:tRNA (guanine(46)-N7)-methyltransferase activity"/>
    <property type="evidence" value="ECO:0007669"/>
    <property type="project" value="UniProtKB-UniRule"/>
</dbReference>
<dbReference type="CDD" id="cd02440">
    <property type="entry name" value="AdoMet_MTases"/>
    <property type="match status" value="1"/>
</dbReference>
<dbReference type="FunFam" id="3.40.50.150:FF:000035">
    <property type="entry name" value="tRNA (guanine-N(7)-)-methyltransferase"/>
    <property type="match status" value="1"/>
</dbReference>
<dbReference type="Gene3D" id="3.40.50.150">
    <property type="entry name" value="Vaccinia Virus protein VP39"/>
    <property type="match status" value="1"/>
</dbReference>
<dbReference type="HAMAP" id="MF_01057">
    <property type="entry name" value="tRNA_methyltr_TrmB"/>
    <property type="match status" value="1"/>
</dbReference>
<dbReference type="InterPro" id="IPR029063">
    <property type="entry name" value="SAM-dependent_MTases_sf"/>
</dbReference>
<dbReference type="InterPro" id="IPR003358">
    <property type="entry name" value="tRNA_(Gua-N-7)_MeTrfase_Trmb"/>
</dbReference>
<dbReference type="InterPro" id="IPR055361">
    <property type="entry name" value="tRNA_methyltr_TrmB_bact"/>
</dbReference>
<dbReference type="NCBIfam" id="TIGR00091">
    <property type="entry name" value="tRNA (guanosine(46)-N7)-methyltransferase TrmB"/>
    <property type="match status" value="1"/>
</dbReference>
<dbReference type="PANTHER" id="PTHR23417">
    <property type="entry name" value="3-DEOXY-D-MANNO-OCTULOSONIC-ACID TRANSFERASE/TRNA GUANINE-N 7 - -METHYLTRANSFERASE"/>
    <property type="match status" value="1"/>
</dbReference>
<dbReference type="PANTHER" id="PTHR23417:SF14">
    <property type="entry name" value="PENTACOTRIPEPTIDE-REPEAT REGION OF PRORP DOMAIN-CONTAINING PROTEIN"/>
    <property type="match status" value="1"/>
</dbReference>
<dbReference type="Pfam" id="PF02390">
    <property type="entry name" value="Methyltransf_4"/>
    <property type="match status" value="1"/>
</dbReference>
<dbReference type="SUPFAM" id="SSF53335">
    <property type="entry name" value="S-adenosyl-L-methionine-dependent methyltransferases"/>
    <property type="match status" value="1"/>
</dbReference>
<dbReference type="PROSITE" id="PS51625">
    <property type="entry name" value="SAM_MT_TRMB"/>
    <property type="match status" value="1"/>
</dbReference>
<sequence length="238" mass="27228">MTDQNETQDTNPVTTRRGVRSFVLRQGRMTEGQKKAFDRNWAKYGLSRDNGMIDPREVFGRDNMLNLEIGFGMGKSLADMAEAAPEQDFIGVEVHLPGVGALLKEVESRGLENVRVYSIDANDVIDLCLPDACLDRVMVFFPDPWHKKKHHKRRLIQPEFVQRIRHKLRVGGILHLATDWENYAEHMLEVMSASEGFANTQEQGGYSPKPDDRPITKFEKRGESLGHGVWDLLFYRTN</sequence>
<name>TRMB_MARN8</name>
<accession>A1TY08</accession>
<feature type="chain" id="PRO_0000288176" description="tRNA (guanine-N(7)-)-methyltransferase">
    <location>
        <begin position="1"/>
        <end position="238"/>
    </location>
</feature>
<feature type="active site" evidence="1">
    <location>
        <position position="143"/>
    </location>
</feature>
<feature type="binding site" evidence="2">
    <location>
        <position position="68"/>
    </location>
    <ligand>
        <name>S-adenosyl-L-methionine</name>
        <dbReference type="ChEBI" id="CHEBI:59789"/>
    </ligand>
</feature>
<feature type="binding site" evidence="2">
    <location>
        <position position="93"/>
    </location>
    <ligand>
        <name>S-adenosyl-L-methionine</name>
        <dbReference type="ChEBI" id="CHEBI:59789"/>
    </ligand>
</feature>
<feature type="binding site" evidence="2">
    <location>
        <position position="120"/>
    </location>
    <ligand>
        <name>S-adenosyl-L-methionine</name>
        <dbReference type="ChEBI" id="CHEBI:59789"/>
    </ligand>
</feature>
<feature type="binding site" evidence="2">
    <location>
        <position position="143"/>
    </location>
    <ligand>
        <name>S-adenosyl-L-methionine</name>
        <dbReference type="ChEBI" id="CHEBI:59789"/>
    </ligand>
</feature>
<feature type="binding site" evidence="2">
    <location>
        <position position="147"/>
    </location>
    <ligand>
        <name>substrate</name>
    </ligand>
</feature>
<feature type="binding site" evidence="2">
    <location>
        <position position="179"/>
    </location>
    <ligand>
        <name>substrate</name>
    </ligand>
</feature>
<feature type="binding site" evidence="2">
    <location>
        <begin position="216"/>
        <end position="219"/>
    </location>
    <ligand>
        <name>substrate</name>
    </ligand>
</feature>
<keyword id="KW-0489">Methyltransferase</keyword>
<keyword id="KW-0949">S-adenosyl-L-methionine</keyword>
<keyword id="KW-0808">Transferase</keyword>
<keyword id="KW-0819">tRNA processing</keyword>
<protein>
    <recommendedName>
        <fullName evidence="2">tRNA (guanine-N(7)-)-methyltransferase</fullName>
        <ecNumber evidence="2">2.1.1.33</ecNumber>
    </recommendedName>
    <alternativeName>
        <fullName evidence="2">tRNA (guanine(46)-N(7))-methyltransferase</fullName>
    </alternativeName>
    <alternativeName>
        <fullName evidence="2">tRNA(m7G46)-methyltransferase</fullName>
    </alternativeName>
</protein>
<evidence type="ECO:0000250" key="1"/>
<evidence type="ECO:0000255" key="2">
    <source>
        <dbReference type="HAMAP-Rule" id="MF_01057"/>
    </source>
</evidence>
<comment type="function">
    <text evidence="2">Catalyzes the formation of N(7)-methylguanine at position 46 (m7G46) in tRNA.</text>
</comment>
<comment type="catalytic activity">
    <reaction evidence="2">
        <text>guanosine(46) in tRNA + S-adenosyl-L-methionine = N(7)-methylguanosine(46) in tRNA + S-adenosyl-L-homocysteine</text>
        <dbReference type="Rhea" id="RHEA:42708"/>
        <dbReference type="Rhea" id="RHEA-COMP:10188"/>
        <dbReference type="Rhea" id="RHEA-COMP:10189"/>
        <dbReference type="ChEBI" id="CHEBI:57856"/>
        <dbReference type="ChEBI" id="CHEBI:59789"/>
        <dbReference type="ChEBI" id="CHEBI:74269"/>
        <dbReference type="ChEBI" id="CHEBI:74480"/>
        <dbReference type="EC" id="2.1.1.33"/>
    </reaction>
</comment>
<comment type="pathway">
    <text evidence="2">tRNA modification; N(7)-methylguanine-tRNA biosynthesis.</text>
</comment>
<comment type="similarity">
    <text evidence="2">Belongs to the class I-like SAM-binding methyltransferase superfamily. TrmB family.</text>
</comment>
<gene>
    <name evidence="2" type="primary">trmB</name>
    <name type="ordered locus">Maqu_0526</name>
</gene>
<organism>
    <name type="scientific">Marinobacter nauticus (strain ATCC 700491 / DSM 11845 / VT8)</name>
    <name type="common">Marinobacter aquaeolei</name>
    <dbReference type="NCBI Taxonomy" id="351348"/>
    <lineage>
        <taxon>Bacteria</taxon>
        <taxon>Pseudomonadati</taxon>
        <taxon>Pseudomonadota</taxon>
        <taxon>Gammaproteobacteria</taxon>
        <taxon>Pseudomonadales</taxon>
        <taxon>Marinobacteraceae</taxon>
        <taxon>Marinobacter</taxon>
    </lineage>
</organism>
<reference key="1">
    <citation type="journal article" date="2011" name="Appl. Environ. Microbiol.">
        <title>Genomic potential of Marinobacter aquaeolei, a biogeochemical 'opportunitroph'.</title>
        <authorList>
            <person name="Singer E."/>
            <person name="Webb E.A."/>
            <person name="Nelson W.C."/>
            <person name="Heidelberg J.F."/>
            <person name="Ivanova N."/>
            <person name="Pati A."/>
            <person name="Edwards K.J."/>
        </authorList>
    </citation>
    <scope>NUCLEOTIDE SEQUENCE [LARGE SCALE GENOMIC DNA]</scope>
    <source>
        <strain>ATCC 700491 / DSM 11845 / VT8</strain>
    </source>
</reference>
<proteinExistence type="inferred from homology"/>